<organism>
    <name type="scientific">Methanocaldococcus jannaschii (strain ATCC 43067 / DSM 2661 / JAL-1 / JCM 10045 / NBRC 100440)</name>
    <name type="common">Methanococcus jannaschii</name>
    <dbReference type="NCBI Taxonomy" id="243232"/>
    <lineage>
        <taxon>Archaea</taxon>
        <taxon>Methanobacteriati</taxon>
        <taxon>Methanobacteriota</taxon>
        <taxon>Methanomada group</taxon>
        <taxon>Methanococci</taxon>
        <taxon>Methanococcales</taxon>
        <taxon>Methanocaldococcaceae</taxon>
        <taxon>Methanocaldococcus</taxon>
    </lineage>
</organism>
<gene>
    <name type="ordered locus">MJ0969</name>
</gene>
<evidence type="ECO:0000255" key="1">
    <source>
        <dbReference type="HAMAP-Rule" id="MF_02223"/>
    </source>
</evidence>
<proteinExistence type="inferred from homology"/>
<dbReference type="EC" id="2.7.1.169" evidence="1"/>
<dbReference type="EMBL" id="L77117">
    <property type="protein sequence ID" value="AAB98974.1"/>
    <property type="molecule type" value="Genomic_DNA"/>
</dbReference>
<dbReference type="PIR" id="A64421">
    <property type="entry name" value="A64421"/>
</dbReference>
<dbReference type="RefSeq" id="WP_010870483.1">
    <property type="nucleotide sequence ID" value="NC_000909.1"/>
</dbReference>
<dbReference type="SMR" id="Q58379"/>
<dbReference type="FunCoup" id="Q58379">
    <property type="interactions" value="118"/>
</dbReference>
<dbReference type="STRING" id="243232.MJ_0969"/>
<dbReference type="PaxDb" id="243232-MJ_0969"/>
<dbReference type="EnsemblBacteria" id="AAB98974">
    <property type="protein sequence ID" value="AAB98974"/>
    <property type="gene ID" value="MJ_0969"/>
</dbReference>
<dbReference type="GeneID" id="1451867"/>
<dbReference type="KEGG" id="mja:MJ_0969"/>
<dbReference type="eggNOG" id="arCOG04263">
    <property type="taxonomic scope" value="Archaea"/>
</dbReference>
<dbReference type="HOGENOM" id="CLU_081191_0_0_2"/>
<dbReference type="InParanoid" id="Q58379"/>
<dbReference type="OrthoDB" id="85822at2157"/>
<dbReference type="PhylomeDB" id="Q58379"/>
<dbReference type="UniPathway" id="UPA00241"/>
<dbReference type="Proteomes" id="UP000000805">
    <property type="component" value="Chromosome"/>
</dbReference>
<dbReference type="GO" id="GO:0005524">
    <property type="term" value="F:ATP binding"/>
    <property type="evidence" value="ECO:0007669"/>
    <property type="project" value="UniProtKB-KW"/>
</dbReference>
<dbReference type="GO" id="GO:0016301">
    <property type="term" value="F:kinase activity"/>
    <property type="evidence" value="ECO:0007669"/>
    <property type="project" value="UniProtKB-UniRule"/>
</dbReference>
<dbReference type="GO" id="GO:0015937">
    <property type="term" value="P:coenzyme A biosynthetic process"/>
    <property type="evidence" value="ECO:0007669"/>
    <property type="project" value="UniProtKB-UniRule"/>
</dbReference>
<dbReference type="Gene3D" id="3.30.230.10">
    <property type="match status" value="1"/>
</dbReference>
<dbReference type="HAMAP" id="MF_02223">
    <property type="entry name" value="Pantoate_kinase"/>
    <property type="match status" value="1"/>
</dbReference>
<dbReference type="InterPro" id="IPR006204">
    <property type="entry name" value="GHMP_kinase_N_dom"/>
</dbReference>
<dbReference type="InterPro" id="IPR012043">
    <property type="entry name" value="PoK"/>
</dbReference>
<dbReference type="InterPro" id="IPR020568">
    <property type="entry name" value="Ribosomal_Su5_D2-typ_SF"/>
</dbReference>
<dbReference type="InterPro" id="IPR014721">
    <property type="entry name" value="Ribsml_uS5_D2-typ_fold_subgr"/>
</dbReference>
<dbReference type="PANTHER" id="PTHR42282:SF1">
    <property type="entry name" value="PANTOATE KINASE"/>
    <property type="match status" value="1"/>
</dbReference>
<dbReference type="PANTHER" id="PTHR42282">
    <property type="entry name" value="PANTOATE KINASE-RELATED"/>
    <property type="match status" value="1"/>
</dbReference>
<dbReference type="Pfam" id="PF00288">
    <property type="entry name" value="GHMP_kinases_N"/>
    <property type="match status" value="1"/>
</dbReference>
<dbReference type="PIRSF" id="PIRSF016896">
    <property type="entry name" value="GHMP_arc_MJ0969"/>
    <property type="match status" value="1"/>
</dbReference>
<dbReference type="SUPFAM" id="SSF54211">
    <property type="entry name" value="Ribosomal protein S5 domain 2-like"/>
    <property type="match status" value="1"/>
</dbReference>
<name>POK_METJA</name>
<feature type="chain" id="PRO_0000107123" description="Pantoate kinase">
    <location>
        <begin position="1"/>
        <end position="270"/>
    </location>
</feature>
<comment type="function">
    <text evidence="1">Phosphorylates (R)-pantoate to form (R)-4-phosphopantoate in the CoA biosynthesis pathway.</text>
</comment>
<comment type="catalytic activity">
    <reaction evidence="1">
        <text>(R)-pantoate + ATP = (R)-4-phosphopantoate + ADP + H(+)</text>
        <dbReference type="Rhea" id="RHEA:28246"/>
        <dbReference type="ChEBI" id="CHEBI:15378"/>
        <dbReference type="ChEBI" id="CHEBI:15980"/>
        <dbReference type="ChEBI" id="CHEBI:30616"/>
        <dbReference type="ChEBI" id="CHEBI:61294"/>
        <dbReference type="ChEBI" id="CHEBI:456216"/>
        <dbReference type="EC" id="2.7.1.169"/>
    </reaction>
</comment>
<comment type="pathway">
    <text evidence="1">Cofactor biosynthesis; coenzyme A biosynthesis.</text>
</comment>
<comment type="similarity">
    <text evidence="1">Belongs to the GHMP kinase family. PoK subfamily.</text>
</comment>
<reference key="1">
    <citation type="journal article" date="1996" name="Science">
        <title>Complete genome sequence of the methanogenic archaeon, Methanococcus jannaschii.</title>
        <authorList>
            <person name="Bult C.J."/>
            <person name="White O."/>
            <person name="Olsen G.J."/>
            <person name="Zhou L."/>
            <person name="Fleischmann R.D."/>
            <person name="Sutton G.G."/>
            <person name="Blake J.A."/>
            <person name="FitzGerald L.M."/>
            <person name="Clayton R.A."/>
            <person name="Gocayne J.D."/>
            <person name="Kerlavage A.R."/>
            <person name="Dougherty B.A."/>
            <person name="Tomb J.-F."/>
            <person name="Adams M.D."/>
            <person name="Reich C.I."/>
            <person name="Overbeek R."/>
            <person name="Kirkness E.F."/>
            <person name="Weinstock K.G."/>
            <person name="Merrick J.M."/>
            <person name="Glodek A."/>
            <person name="Scott J.L."/>
            <person name="Geoghagen N.S.M."/>
            <person name="Weidman J.F."/>
            <person name="Fuhrmann J.L."/>
            <person name="Nguyen D."/>
            <person name="Utterback T.R."/>
            <person name="Kelley J.M."/>
            <person name="Peterson J.D."/>
            <person name="Sadow P.W."/>
            <person name="Hanna M.C."/>
            <person name="Cotton M.D."/>
            <person name="Roberts K.M."/>
            <person name="Hurst M.A."/>
            <person name="Kaine B.P."/>
            <person name="Borodovsky M."/>
            <person name="Klenk H.-P."/>
            <person name="Fraser C.M."/>
            <person name="Smith H.O."/>
            <person name="Woese C.R."/>
            <person name="Venter J.C."/>
        </authorList>
    </citation>
    <scope>NUCLEOTIDE SEQUENCE [LARGE SCALE GENOMIC DNA]</scope>
    <source>
        <strain>ATCC 43067 / DSM 2661 / JAL-1 / JCM 10045 / NBRC 100440</strain>
    </source>
</reference>
<keyword id="KW-0067">ATP-binding</keyword>
<keyword id="KW-0173">Coenzyme A biosynthesis</keyword>
<keyword id="KW-0418">Kinase</keyword>
<keyword id="KW-0547">Nucleotide-binding</keyword>
<keyword id="KW-1185">Reference proteome</keyword>
<keyword id="KW-0808">Transferase</keyword>
<accession>Q58379</accession>
<protein>
    <recommendedName>
        <fullName evidence="1">Pantoate kinase</fullName>
        <shortName evidence="1">PoK</shortName>
        <ecNumber evidence="1">2.7.1.169</ecNumber>
    </recommendedName>
</protein>
<sequence>MFAPGHITGFFVICKSSNKLKTGSIGAGITIDRGVNVELKEGNGSIFYNNKKVNICAVEKVIEHYKKFGYNDDYDIIFSSDFPLGSGLGMSGGCALILAKKLNEMLNLNENYAEIAHISEVECGTGLGDVIAQYVKGFVIRKTPGFPINVEKIVVDDDYYIIIEIFGKKETKEIITNDIWIKKINEYGERCLNELLKNPTLENFVNLSYEFAVNTGLINEKILSICEDLKFTVGASQSMLGNTLFCISKKETLEDALSILKNPIVCNIYY</sequence>